<reference key="1">
    <citation type="journal article" date="2001" name="Genome Res.">
        <title>The complete genome sequence of the lactic acid bacterium Lactococcus lactis ssp. lactis IL1403.</title>
        <authorList>
            <person name="Bolotin A."/>
            <person name="Wincker P."/>
            <person name="Mauger S."/>
            <person name="Jaillon O."/>
            <person name="Malarme K."/>
            <person name="Weissenbach J."/>
            <person name="Ehrlich S.D."/>
            <person name="Sorokin A."/>
        </authorList>
    </citation>
    <scope>NUCLEOTIDE SEQUENCE [LARGE SCALE GENOMIC DNA]</scope>
    <source>
        <strain>IL1403</strain>
    </source>
</reference>
<organism>
    <name type="scientific">Lactococcus lactis subsp. lactis (strain IL1403)</name>
    <name type="common">Streptococcus lactis</name>
    <dbReference type="NCBI Taxonomy" id="272623"/>
    <lineage>
        <taxon>Bacteria</taxon>
        <taxon>Bacillati</taxon>
        <taxon>Bacillota</taxon>
        <taxon>Bacilli</taxon>
        <taxon>Lactobacillales</taxon>
        <taxon>Streptococcaceae</taxon>
        <taxon>Lactococcus</taxon>
    </lineage>
</organism>
<feature type="chain" id="PRO_0000180146" description="Acyl carrier protein">
    <location>
        <begin position="1"/>
        <end position="73"/>
    </location>
</feature>
<feature type="domain" description="Carrier" evidence="2">
    <location>
        <begin position="1"/>
        <end position="73"/>
    </location>
</feature>
<feature type="modified residue" description="O-(pantetheine 4'-phosphoryl)serine" evidence="2">
    <location>
        <position position="35"/>
    </location>
</feature>
<protein>
    <recommendedName>
        <fullName evidence="1">Acyl carrier protein</fullName>
        <shortName evidence="1">ACP</shortName>
    </recommendedName>
</protein>
<dbReference type="EMBL" id="AE005176">
    <property type="protein sequence ID" value="AAK04870.1"/>
    <property type="molecule type" value="Genomic_DNA"/>
</dbReference>
<dbReference type="PIR" id="D86721">
    <property type="entry name" value="D86721"/>
</dbReference>
<dbReference type="RefSeq" id="NP_266928.1">
    <property type="nucleotide sequence ID" value="NC_002662.1"/>
</dbReference>
<dbReference type="RefSeq" id="WP_003132501.1">
    <property type="nucleotide sequence ID" value="NC_002662.1"/>
</dbReference>
<dbReference type="SMR" id="Q9CHF9"/>
<dbReference type="PaxDb" id="272623-L0183"/>
<dbReference type="EnsemblBacteria" id="AAK04870">
    <property type="protein sequence ID" value="AAK04870"/>
    <property type="gene ID" value="L0183"/>
</dbReference>
<dbReference type="KEGG" id="lla:L0183"/>
<dbReference type="PATRIC" id="fig|272623.7.peg.827"/>
<dbReference type="eggNOG" id="COG0236">
    <property type="taxonomic scope" value="Bacteria"/>
</dbReference>
<dbReference type="HOGENOM" id="CLU_108696_5_0_9"/>
<dbReference type="OrthoDB" id="9804551at2"/>
<dbReference type="UniPathway" id="UPA00094"/>
<dbReference type="Proteomes" id="UP000002196">
    <property type="component" value="Chromosome"/>
</dbReference>
<dbReference type="GO" id="GO:0005737">
    <property type="term" value="C:cytoplasm"/>
    <property type="evidence" value="ECO:0007669"/>
    <property type="project" value="UniProtKB-SubCell"/>
</dbReference>
<dbReference type="GO" id="GO:0000036">
    <property type="term" value="F:acyl carrier activity"/>
    <property type="evidence" value="ECO:0007669"/>
    <property type="project" value="UniProtKB-UniRule"/>
</dbReference>
<dbReference type="Gene3D" id="1.10.1200.10">
    <property type="entry name" value="ACP-like"/>
    <property type="match status" value="1"/>
</dbReference>
<dbReference type="HAMAP" id="MF_01217">
    <property type="entry name" value="Acyl_carrier"/>
    <property type="match status" value="1"/>
</dbReference>
<dbReference type="InterPro" id="IPR003231">
    <property type="entry name" value="ACP"/>
</dbReference>
<dbReference type="InterPro" id="IPR036736">
    <property type="entry name" value="ACP-like_sf"/>
</dbReference>
<dbReference type="InterPro" id="IPR009081">
    <property type="entry name" value="PP-bd_ACP"/>
</dbReference>
<dbReference type="NCBIfam" id="NF002150">
    <property type="entry name" value="PRK00982.1-4"/>
    <property type="match status" value="1"/>
</dbReference>
<dbReference type="Pfam" id="PF00550">
    <property type="entry name" value="PP-binding"/>
    <property type="match status" value="1"/>
</dbReference>
<dbReference type="SUPFAM" id="SSF47336">
    <property type="entry name" value="ACP-like"/>
    <property type="match status" value="1"/>
</dbReference>
<dbReference type="PROSITE" id="PS50075">
    <property type="entry name" value="CARRIER"/>
    <property type="match status" value="1"/>
</dbReference>
<sequence>MAVFEKVQDIIVDELGKEKEEVTLETSFEELDADSLDLFQIINDIEDEFDVEVDTEADMKTVADLVKYVENNK</sequence>
<accession>Q9CHF9</accession>
<comment type="function">
    <text evidence="1">Carrier of the growing fatty acid chain in fatty acid biosynthesis.</text>
</comment>
<comment type="pathway">
    <text evidence="1">Lipid metabolism; fatty acid biosynthesis.</text>
</comment>
<comment type="subcellular location">
    <subcellularLocation>
        <location evidence="1">Cytoplasm</location>
    </subcellularLocation>
</comment>
<comment type="PTM">
    <text evidence="1">4'-phosphopantetheine is transferred from CoA to a specific serine of apo-ACP by AcpS. This modification is essential for activity because fatty acids are bound in thioester linkage to the sulfhydryl of the prosthetic group.</text>
</comment>
<comment type="similarity">
    <text evidence="1">Belongs to the acyl carrier protein (ACP) family.</text>
</comment>
<keyword id="KW-0963">Cytoplasm</keyword>
<keyword id="KW-0275">Fatty acid biosynthesis</keyword>
<keyword id="KW-0276">Fatty acid metabolism</keyword>
<keyword id="KW-0444">Lipid biosynthesis</keyword>
<keyword id="KW-0443">Lipid metabolism</keyword>
<keyword id="KW-0596">Phosphopantetheine</keyword>
<keyword id="KW-0597">Phosphoprotein</keyword>
<keyword id="KW-1185">Reference proteome</keyword>
<name>ACP_LACLA</name>
<evidence type="ECO:0000255" key="1">
    <source>
        <dbReference type="HAMAP-Rule" id="MF_01217"/>
    </source>
</evidence>
<evidence type="ECO:0000255" key="2">
    <source>
        <dbReference type="PROSITE-ProRule" id="PRU00258"/>
    </source>
</evidence>
<proteinExistence type="inferred from homology"/>
<gene>
    <name evidence="1" type="primary">acpP</name>
    <name type="synonym">acpA</name>
    <name type="ordered locus">LL0772</name>
    <name type="ORF">L0183</name>
</gene>